<sequence>MGTADSDEMAPEAPQHTHIDVHIHQESALAKLLLTCCSALRPRATQARGSSRLLVASWVMQIVLGILSAVLGGFFYIRDYTLLVTSGAAIWTGAVAVLAGAAAFIYEKRGGTYWALLRTLLTLAAFSTAIAALKLWNEDFRYGYSYYNSACRISSSSDWNTPAPTQSPEEVRRLHLCTSFMDMLKALFRTLQAMLLGVWILLLLASLTPLWLYCWRMFPTKGKRDQKEMLEVSGI</sequence>
<feature type="chain" id="PRO_0000279872" description="Transmembrane protein 176A">
    <location>
        <begin position="1"/>
        <end position="235"/>
    </location>
</feature>
<feature type="transmembrane region" description="Helical" evidence="2">
    <location>
        <begin position="55"/>
        <end position="75"/>
    </location>
</feature>
<feature type="transmembrane region" description="Helical" evidence="2">
    <location>
        <begin position="86"/>
        <end position="106"/>
    </location>
</feature>
<feature type="transmembrane region" description="Helical" evidence="2">
    <location>
        <begin position="113"/>
        <end position="133"/>
    </location>
</feature>
<feature type="transmembrane region" description="Helical" evidence="2">
    <location>
        <begin position="193"/>
        <end position="213"/>
    </location>
</feature>
<feature type="modified residue" description="Phosphoserine" evidence="1">
    <location>
        <position position="38"/>
    </location>
</feature>
<feature type="sequence variant" id="VAR_031032" description="In dbSNP:rs741064." evidence="3">
    <original>T</original>
    <variation>A</variation>
    <location>
        <position position="122"/>
    </location>
</feature>
<feature type="sequence variant" id="VAR_031033" description="In dbSNP:rs10378.">
    <original>L</original>
    <variation>F</variation>
    <location>
        <position position="187"/>
    </location>
</feature>
<feature type="sequence variant" id="VAR_031034" description="In dbSNP:rs9088." evidence="3">
    <original>T</original>
    <variation>A</variation>
    <location>
        <position position="208"/>
    </location>
</feature>
<keyword id="KW-0472">Membrane</keyword>
<keyword id="KW-0597">Phosphoprotein</keyword>
<keyword id="KW-1267">Proteomics identification</keyword>
<keyword id="KW-1185">Reference proteome</keyword>
<keyword id="KW-0812">Transmembrane</keyword>
<keyword id="KW-1133">Transmembrane helix</keyword>
<reference key="1">
    <citation type="journal article" date="2002" name="J. Immunol.">
        <title>Large scale identification of human hepatocellular carcinoma-associated antigens by autoantibodies.</title>
        <authorList>
            <person name="Wang Y."/>
            <person name="Han K.-J."/>
            <person name="Pang X.-W."/>
            <person name="Vaughan H.A."/>
            <person name="Qu W."/>
            <person name="Dong X.-Y."/>
            <person name="Peng J.-R."/>
            <person name="Zhao H.-T."/>
            <person name="Rui J.-A."/>
            <person name="Leng X.-S."/>
            <person name="Cebon J."/>
            <person name="Burgess A.W."/>
            <person name="Chen W.-F."/>
        </authorList>
    </citation>
    <scope>NUCLEOTIDE SEQUENCE [MRNA]</scope>
    <scope>VARIANTS ALA-122 AND ALA-208</scope>
    <source>
        <tissue>Hepatoma</tissue>
    </source>
</reference>
<reference key="2">
    <citation type="journal article" date="2003" name="Nature">
        <title>The DNA sequence of human chromosome 7.</title>
        <authorList>
            <person name="Hillier L.W."/>
            <person name="Fulton R.S."/>
            <person name="Fulton L.A."/>
            <person name="Graves T.A."/>
            <person name="Pepin K.H."/>
            <person name="Wagner-McPherson C."/>
            <person name="Layman D."/>
            <person name="Maas J."/>
            <person name="Jaeger S."/>
            <person name="Walker R."/>
            <person name="Wylie K."/>
            <person name="Sekhon M."/>
            <person name="Becker M.C."/>
            <person name="O'Laughlin M.D."/>
            <person name="Schaller M.E."/>
            <person name="Fewell G.A."/>
            <person name="Delehaunty K.D."/>
            <person name="Miner T.L."/>
            <person name="Nash W.E."/>
            <person name="Cordes M."/>
            <person name="Du H."/>
            <person name="Sun H."/>
            <person name="Edwards J."/>
            <person name="Bradshaw-Cordum H."/>
            <person name="Ali J."/>
            <person name="Andrews S."/>
            <person name="Isak A."/>
            <person name="Vanbrunt A."/>
            <person name="Nguyen C."/>
            <person name="Du F."/>
            <person name="Lamar B."/>
            <person name="Courtney L."/>
            <person name="Kalicki J."/>
            <person name="Ozersky P."/>
            <person name="Bielicki L."/>
            <person name="Scott K."/>
            <person name="Holmes A."/>
            <person name="Harkins R."/>
            <person name="Harris A."/>
            <person name="Strong C.M."/>
            <person name="Hou S."/>
            <person name="Tomlinson C."/>
            <person name="Dauphin-Kohlberg S."/>
            <person name="Kozlowicz-Reilly A."/>
            <person name="Leonard S."/>
            <person name="Rohlfing T."/>
            <person name="Rock S.M."/>
            <person name="Tin-Wollam A.-M."/>
            <person name="Abbott A."/>
            <person name="Minx P."/>
            <person name="Maupin R."/>
            <person name="Strowmatt C."/>
            <person name="Latreille P."/>
            <person name="Miller N."/>
            <person name="Johnson D."/>
            <person name="Murray J."/>
            <person name="Woessner J.P."/>
            <person name="Wendl M.C."/>
            <person name="Yang S.-P."/>
            <person name="Schultz B.R."/>
            <person name="Wallis J.W."/>
            <person name="Spieth J."/>
            <person name="Bieri T.A."/>
            <person name="Nelson J.O."/>
            <person name="Berkowicz N."/>
            <person name="Wohldmann P.E."/>
            <person name="Cook L.L."/>
            <person name="Hickenbotham M.T."/>
            <person name="Eldred J."/>
            <person name="Williams D."/>
            <person name="Bedell J.A."/>
            <person name="Mardis E.R."/>
            <person name="Clifton S.W."/>
            <person name="Chissoe S.L."/>
            <person name="Marra M.A."/>
            <person name="Raymond C."/>
            <person name="Haugen E."/>
            <person name="Gillett W."/>
            <person name="Zhou Y."/>
            <person name="James R."/>
            <person name="Phelps K."/>
            <person name="Iadanoto S."/>
            <person name="Bubb K."/>
            <person name="Simms E."/>
            <person name="Levy R."/>
            <person name="Clendenning J."/>
            <person name="Kaul R."/>
            <person name="Kent W.J."/>
            <person name="Furey T.S."/>
            <person name="Baertsch R.A."/>
            <person name="Brent M.R."/>
            <person name="Keibler E."/>
            <person name="Flicek P."/>
            <person name="Bork P."/>
            <person name="Suyama M."/>
            <person name="Bailey J.A."/>
            <person name="Portnoy M.E."/>
            <person name="Torrents D."/>
            <person name="Chinwalla A.T."/>
            <person name="Gish W.R."/>
            <person name="Eddy S.R."/>
            <person name="McPherson J.D."/>
            <person name="Olson M.V."/>
            <person name="Eichler E.E."/>
            <person name="Green E.D."/>
            <person name="Waterston R.H."/>
            <person name="Wilson R.K."/>
        </authorList>
    </citation>
    <scope>NUCLEOTIDE SEQUENCE [LARGE SCALE GENOMIC DNA]</scope>
</reference>
<reference key="3">
    <citation type="submission" date="2005-09" db="EMBL/GenBank/DDBJ databases">
        <authorList>
            <person name="Mural R.J."/>
            <person name="Istrail S."/>
            <person name="Sutton G.G."/>
            <person name="Florea L."/>
            <person name="Halpern A.L."/>
            <person name="Mobarry C.M."/>
            <person name="Lippert R."/>
            <person name="Walenz B."/>
            <person name="Shatkay H."/>
            <person name="Dew I."/>
            <person name="Miller J.R."/>
            <person name="Flanigan M.J."/>
            <person name="Edwards N.J."/>
            <person name="Bolanos R."/>
            <person name="Fasulo D."/>
            <person name="Halldorsson B.V."/>
            <person name="Hannenhalli S."/>
            <person name="Turner R."/>
            <person name="Yooseph S."/>
            <person name="Lu F."/>
            <person name="Nusskern D.R."/>
            <person name="Shue B.C."/>
            <person name="Zheng X.H."/>
            <person name="Zhong F."/>
            <person name="Delcher A.L."/>
            <person name="Huson D.H."/>
            <person name="Kravitz S.A."/>
            <person name="Mouchard L."/>
            <person name="Reinert K."/>
            <person name="Remington K.A."/>
            <person name="Clark A.G."/>
            <person name="Waterman M.S."/>
            <person name="Eichler E.E."/>
            <person name="Adams M.D."/>
            <person name="Hunkapiller M.W."/>
            <person name="Myers E.W."/>
            <person name="Venter J.C."/>
        </authorList>
    </citation>
    <scope>NUCLEOTIDE SEQUENCE [LARGE SCALE GENOMIC DNA]</scope>
</reference>
<reference key="4">
    <citation type="journal article" date="2004" name="Genome Res.">
        <title>The status, quality, and expansion of the NIH full-length cDNA project: the Mammalian Gene Collection (MGC).</title>
        <authorList>
            <consortium name="The MGC Project Team"/>
        </authorList>
    </citation>
    <scope>NUCLEOTIDE SEQUENCE [LARGE SCALE MRNA]</scope>
    <source>
        <tissue>Lung</tissue>
    </source>
</reference>
<reference key="5">
    <citation type="journal article" date="2014" name="Traffic">
        <title>Cellular zinc levels are modulated by TRPML1-TMEM163 interaction.</title>
        <authorList>
            <person name="Cuajungco M.P."/>
            <person name="Basilio L.C."/>
            <person name="Silva J."/>
            <person name="Hart T."/>
            <person name="Tringali J."/>
            <person name="Chen C.C."/>
            <person name="Biel M."/>
            <person name="Grimm C."/>
        </authorList>
    </citation>
    <scope>INTERACTION WITH MCOLN2</scope>
</reference>
<evidence type="ECO:0000250" key="1">
    <source>
        <dbReference type="UniProtKB" id="Q9DCS1"/>
    </source>
</evidence>
<evidence type="ECO:0000255" key="2"/>
<evidence type="ECO:0000269" key="3">
    <source>
    </source>
</evidence>
<evidence type="ECO:0000269" key="4">
    <source>
    </source>
</evidence>
<evidence type="ECO:0000305" key="5"/>
<protein>
    <recommendedName>
        <fullName>Transmembrane protein 176A</fullName>
    </recommendedName>
    <alternativeName>
        <fullName>Hepatocellular carcinoma-associated antigen 112</fullName>
    </alternativeName>
</protein>
<organism>
    <name type="scientific">Homo sapiens</name>
    <name type="common">Human</name>
    <dbReference type="NCBI Taxonomy" id="9606"/>
    <lineage>
        <taxon>Eukaryota</taxon>
        <taxon>Metazoa</taxon>
        <taxon>Chordata</taxon>
        <taxon>Craniata</taxon>
        <taxon>Vertebrata</taxon>
        <taxon>Euteleostomi</taxon>
        <taxon>Mammalia</taxon>
        <taxon>Eutheria</taxon>
        <taxon>Euarchontoglires</taxon>
        <taxon>Primates</taxon>
        <taxon>Haplorrhini</taxon>
        <taxon>Catarrhini</taxon>
        <taxon>Hominidae</taxon>
        <taxon>Homo</taxon>
    </lineage>
</organism>
<dbReference type="EMBL" id="AF258340">
    <property type="protein sequence ID" value="AAF68667.1"/>
    <property type="molecule type" value="mRNA"/>
</dbReference>
<dbReference type="EMBL" id="AC006479">
    <property type="protein sequence ID" value="AAP21884.1"/>
    <property type="molecule type" value="Genomic_DNA"/>
</dbReference>
<dbReference type="EMBL" id="CH471173">
    <property type="protein sequence ID" value="EAW54089.1"/>
    <property type="molecule type" value="Genomic_DNA"/>
</dbReference>
<dbReference type="EMBL" id="CH471173">
    <property type="protein sequence ID" value="EAW54091.1"/>
    <property type="molecule type" value="Genomic_DNA"/>
</dbReference>
<dbReference type="EMBL" id="BC008303">
    <property type="protein sequence ID" value="AAH08303.1"/>
    <property type="molecule type" value="mRNA"/>
</dbReference>
<dbReference type="CCDS" id="CCDS5909.1"/>
<dbReference type="RefSeq" id="NP_060957.2">
    <property type="nucleotide sequence ID" value="NM_018487.2"/>
</dbReference>
<dbReference type="BioGRID" id="120643">
    <property type="interactions" value="20"/>
</dbReference>
<dbReference type="FunCoup" id="Q96HP8">
    <property type="interactions" value="1"/>
</dbReference>
<dbReference type="IntAct" id="Q96HP8">
    <property type="interactions" value="17"/>
</dbReference>
<dbReference type="STRING" id="9606.ENSP00000417626"/>
<dbReference type="TCDB" id="1.A.37.8.2">
    <property type="family name" value="the cd20 ca(2+) channel (cd20) family"/>
</dbReference>
<dbReference type="GlyCosmos" id="Q96HP8">
    <property type="glycosylation" value="1 site, 2 glycans"/>
</dbReference>
<dbReference type="GlyGen" id="Q96HP8">
    <property type="glycosylation" value="1 site, 2 O-linked glycans (1 site)"/>
</dbReference>
<dbReference type="iPTMnet" id="Q96HP8"/>
<dbReference type="PhosphoSitePlus" id="Q96HP8"/>
<dbReference type="BioMuta" id="TMEM176A"/>
<dbReference type="DMDM" id="74731960"/>
<dbReference type="jPOST" id="Q96HP8"/>
<dbReference type="MassIVE" id="Q96HP8"/>
<dbReference type="PaxDb" id="9606-ENSP00000417626"/>
<dbReference type="PeptideAtlas" id="Q96HP8"/>
<dbReference type="ProteomicsDB" id="76773"/>
<dbReference type="Antibodypedia" id="2112">
    <property type="antibodies" value="108 antibodies from 22 providers"/>
</dbReference>
<dbReference type="DNASU" id="55365"/>
<dbReference type="Ensembl" id="ENST00000004103.8">
    <property type="protein sequence ID" value="ENSP00000004103.3"/>
    <property type="gene ID" value="ENSG00000002933.9"/>
</dbReference>
<dbReference type="Ensembl" id="ENST00000484928.5">
    <property type="protein sequence ID" value="ENSP00000417626.1"/>
    <property type="gene ID" value="ENSG00000002933.9"/>
</dbReference>
<dbReference type="GeneID" id="55365"/>
<dbReference type="KEGG" id="hsa:55365"/>
<dbReference type="MANE-Select" id="ENST00000004103.8">
    <property type="protein sequence ID" value="ENSP00000004103.3"/>
    <property type="RefSeq nucleotide sequence ID" value="NM_018487.3"/>
    <property type="RefSeq protein sequence ID" value="NP_060957.2"/>
</dbReference>
<dbReference type="UCSC" id="uc003whx.2">
    <property type="organism name" value="human"/>
</dbReference>
<dbReference type="AGR" id="HGNC:24930"/>
<dbReference type="CTD" id="55365"/>
<dbReference type="DisGeNET" id="55365"/>
<dbReference type="GeneCards" id="TMEM176A"/>
<dbReference type="HGNC" id="HGNC:24930">
    <property type="gene designation" value="TMEM176A"/>
</dbReference>
<dbReference type="HPA" id="ENSG00000002933">
    <property type="expression patterns" value="Tissue enhanced (kidney, liver)"/>
</dbReference>
<dbReference type="MIM" id="610334">
    <property type="type" value="gene"/>
</dbReference>
<dbReference type="neXtProt" id="NX_Q96HP8"/>
<dbReference type="OpenTargets" id="ENSG00000002933"/>
<dbReference type="PharmGKB" id="PA162405947"/>
<dbReference type="VEuPathDB" id="HostDB:ENSG00000002933"/>
<dbReference type="eggNOG" id="ENOG502SF8T">
    <property type="taxonomic scope" value="Eukaryota"/>
</dbReference>
<dbReference type="GeneTree" id="ENSGT00530000064074"/>
<dbReference type="HOGENOM" id="CLU_090530_1_0_1"/>
<dbReference type="InParanoid" id="Q96HP8"/>
<dbReference type="OMA" id="KQGGICW"/>
<dbReference type="OrthoDB" id="9837693at2759"/>
<dbReference type="PAN-GO" id="Q96HP8">
    <property type="GO annotations" value="1 GO annotation based on evolutionary models"/>
</dbReference>
<dbReference type="PhylomeDB" id="Q96HP8"/>
<dbReference type="TreeFam" id="TF335389"/>
<dbReference type="PathwayCommons" id="Q96HP8"/>
<dbReference type="SignaLink" id="Q96HP8"/>
<dbReference type="BioGRID-ORCS" id="55365">
    <property type="hits" value="8 hits in 1154 CRISPR screens"/>
</dbReference>
<dbReference type="ChiTaRS" id="TMEM176A">
    <property type="organism name" value="human"/>
</dbReference>
<dbReference type="GenomeRNAi" id="55365"/>
<dbReference type="Pharos" id="Q96HP8">
    <property type="development level" value="Tbio"/>
</dbReference>
<dbReference type="PRO" id="PR:Q96HP8"/>
<dbReference type="Proteomes" id="UP000005640">
    <property type="component" value="Chromosome 7"/>
</dbReference>
<dbReference type="RNAct" id="Q96HP8">
    <property type="molecule type" value="protein"/>
</dbReference>
<dbReference type="Bgee" id="ENSG00000002933">
    <property type="expression patterns" value="Expressed in right lobe of liver and 176 other cell types or tissues"/>
</dbReference>
<dbReference type="ExpressionAtlas" id="Q96HP8">
    <property type="expression patterns" value="baseline and differential"/>
</dbReference>
<dbReference type="GO" id="GO:0016020">
    <property type="term" value="C:membrane"/>
    <property type="evidence" value="ECO:0007669"/>
    <property type="project" value="UniProtKB-SubCell"/>
</dbReference>
<dbReference type="GO" id="GO:2001199">
    <property type="term" value="P:negative regulation of dendritic cell differentiation"/>
    <property type="evidence" value="ECO:0007669"/>
    <property type="project" value="Ensembl"/>
</dbReference>
<dbReference type="InterPro" id="IPR007237">
    <property type="entry name" value="CD20-like"/>
</dbReference>
<dbReference type="InterPro" id="IPR009281">
    <property type="entry name" value="TMEM176A/TMEM176B"/>
</dbReference>
<dbReference type="PANTHER" id="PTHR15756">
    <property type="entry name" value="LR8/HCA112"/>
    <property type="match status" value="1"/>
</dbReference>
<dbReference type="PANTHER" id="PTHR15756:SF6">
    <property type="entry name" value="TRANSMEMBRANE PROTEIN 176A"/>
    <property type="match status" value="1"/>
</dbReference>
<dbReference type="Pfam" id="PF04103">
    <property type="entry name" value="CD20"/>
    <property type="match status" value="1"/>
</dbReference>
<comment type="subunit">
    <text evidence="4">Interacts with MCOLN2.</text>
</comment>
<comment type="interaction">
    <interactant intactId="EBI-2800645">
        <id>Q96HP8</id>
    </interactant>
    <interactant intactId="EBI-7797864">
        <id>P11912</id>
        <label>CD79A</label>
    </interactant>
    <organismsDiffer>false</organismsDiffer>
    <experiments>3</experiments>
</comment>
<comment type="interaction">
    <interactant intactId="EBI-2800645">
        <id>Q96HP8</id>
    </interactant>
    <interactant intactId="EBI-2622997">
        <id>Q9HA82</id>
        <label>CERS4</label>
    </interactant>
    <organismsDiffer>false</organismsDiffer>
    <experiments>3</experiments>
</comment>
<comment type="interaction">
    <interactant intactId="EBI-2800645">
        <id>Q96HP8</id>
    </interactant>
    <interactant intactId="EBI-712073">
        <id>Q8NBJ4</id>
        <label>GOLM1</label>
    </interactant>
    <organismsDiffer>false</organismsDiffer>
    <experiments>3</experiments>
</comment>
<comment type="interaction">
    <interactant intactId="EBI-2800645">
        <id>Q96HP8</id>
    </interactant>
    <interactant intactId="EBI-3934936">
        <id>O95279</id>
        <label>KCNK5</label>
    </interactant>
    <organismsDiffer>false</organismsDiffer>
    <experiments>3</experiments>
</comment>
<comment type="interaction">
    <interactant intactId="EBI-2800645">
        <id>Q96HP8</id>
    </interactant>
    <interactant intactId="EBI-725647">
        <id>Q99732</id>
        <label>LITAF</label>
    </interactant>
    <organismsDiffer>false</organismsDiffer>
    <experiments>3</experiments>
</comment>
<comment type="interaction">
    <interactant intactId="EBI-2800645">
        <id>Q96HP8</id>
    </interactant>
    <interactant intactId="EBI-373355">
        <id>Q5SR56</id>
        <label>MFSD14B</label>
    </interactant>
    <organismsDiffer>false</organismsDiffer>
    <experiments>3</experiments>
</comment>
<comment type="interaction">
    <interactant intactId="EBI-2800645">
        <id>Q96HP8</id>
    </interactant>
    <interactant intactId="EBI-3923617">
        <id>Q9H2K0</id>
        <label>MTIF3</label>
    </interactant>
    <organismsDiffer>false</organismsDiffer>
    <experiments>3</experiments>
</comment>
<comment type="interaction">
    <interactant intactId="EBI-2800645">
        <id>Q96HP8</id>
    </interactant>
    <interactant intactId="EBI-10192441">
        <id>Q86VR2</id>
        <label>RETREG3</label>
    </interactant>
    <organismsDiffer>false</organismsDiffer>
    <experiments>3</experiments>
</comment>
<comment type="interaction">
    <interactant intactId="EBI-2800645">
        <id>Q96HP8</id>
    </interactant>
    <interactant intactId="EBI-13385260">
        <id>Q9BSN4</id>
        <label>SCD5</label>
    </interactant>
    <organismsDiffer>false</organismsDiffer>
    <experiments>3</experiments>
</comment>
<comment type="interaction">
    <interactant intactId="EBI-2800645">
        <id>Q96HP8</id>
    </interactant>
    <interactant intactId="EBI-1046170">
        <id>O95470</id>
        <label>SGPL1</label>
    </interactant>
    <organismsDiffer>false</organismsDiffer>
    <experiments>3</experiments>
</comment>
<comment type="interaction">
    <interactant intactId="EBI-2800645">
        <id>Q96HP8</id>
    </interactant>
    <interactant intactId="EBI-6268651">
        <id>Q9NPL8</id>
        <label>TIMMDC1</label>
    </interactant>
    <organismsDiffer>false</organismsDiffer>
    <experiments>3</experiments>
</comment>
<comment type="interaction">
    <interactant intactId="EBI-2800645">
        <id>Q96HP8</id>
    </interactant>
    <interactant intactId="EBI-2821479">
        <id>Q3YBM2</id>
        <label>TMEM176B</label>
    </interactant>
    <organismsDiffer>false</organismsDiffer>
    <experiments>3</experiments>
</comment>
<comment type="interaction">
    <interactant intactId="EBI-2800645">
        <id>Q96HP8</id>
    </interactant>
    <interactant intactId="EBI-6447886">
        <id>Q9Y320</id>
        <label>TMX2</label>
    </interactant>
    <organismsDiffer>false</organismsDiffer>
    <experiments>3</experiments>
</comment>
<comment type="subcellular location">
    <subcellularLocation>
        <location evidence="5">Membrane</location>
        <topology evidence="5">Multi-pass membrane protein</topology>
    </subcellularLocation>
</comment>
<comment type="similarity">
    <text evidence="5">Belongs to the TMEM176 family.</text>
</comment>
<name>T176A_HUMAN</name>
<accession>Q96HP8</accession>
<accession>D3DX00</accession>
<accession>Q9NYC7</accession>
<proteinExistence type="evidence at protein level"/>
<gene>
    <name type="primary">TMEM176A</name>
    <name type="synonym">HCA112</name>
</gene>